<accession>A4SV76</accession>
<sequence length="337" mass="36228">MSKQEELLIQWGDRVKACLANLDIKSLGRVGVLLGGRSGEREISLMSGNGVLQALLSKGVDAHGFDPGLRNPTELATEKFDRIFISLHGRFGEDGTIQGLLELLELPYTGSGVLASALAIDKIATKQIWISNGLSTPEYEELTAKSDWNAVVKHLGLPLIVKPAHEGSSLGLTKVKSVEELPAAYQLAAGLDKKVIAETCIVGDELTCPLVGQGNSAEALPVIKIIPPQANYDFHNKYFSDETQYLCPTGLTAEINAAVQDLALAAYQTLGCRTWGRADVMLDKKTGKPYLLEMNTSPGMTSHSLVPMAAKAAGVEYADLVLWLLSQTLLQKEGART</sequence>
<keyword id="KW-0067">ATP-binding</keyword>
<keyword id="KW-0133">Cell shape</keyword>
<keyword id="KW-0961">Cell wall biogenesis/degradation</keyword>
<keyword id="KW-0963">Cytoplasm</keyword>
<keyword id="KW-0436">Ligase</keyword>
<keyword id="KW-0460">Magnesium</keyword>
<keyword id="KW-0464">Manganese</keyword>
<keyword id="KW-0479">Metal-binding</keyword>
<keyword id="KW-0547">Nucleotide-binding</keyword>
<keyword id="KW-0573">Peptidoglycan synthesis</keyword>
<keyword id="KW-1185">Reference proteome</keyword>
<evidence type="ECO:0000250" key="1"/>
<evidence type="ECO:0000255" key="2">
    <source>
        <dbReference type="HAMAP-Rule" id="MF_00047"/>
    </source>
</evidence>
<comment type="function">
    <text evidence="2">Cell wall formation.</text>
</comment>
<comment type="catalytic activity">
    <reaction evidence="2">
        <text>2 D-alanine + ATP = D-alanyl-D-alanine + ADP + phosphate + H(+)</text>
        <dbReference type="Rhea" id="RHEA:11224"/>
        <dbReference type="ChEBI" id="CHEBI:15378"/>
        <dbReference type="ChEBI" id="CHEBI:30616"/>
        <dbReference type="ChEBI" id="CHEBI:43474"/>
        <dbReference type="ChEBI" id="CHEBI:57416"/>
        <dbReference type="ChEBI" id="CHEBI:57822"/>
        <dbReference type="ChEBI" id="CHEBI:456216"/>
        <dbReference type="EC" id="6.3.2.4"/>
    </reaction>
</comment>
<comment type="cofactor">
    <cofactor evidence="1">
        <name>Mg(2+)</name>
        <dbReference type="ChEBI" id="CHEBI:18420"/>
    </cofactor>
    <cofactor evidence="1">
        <name>Mn(2+)</name>
        <dbReference type="ChEBI" id="CHEBI:29035"/>
    </cofactor>
    <text evidence="1">Binds 2 magnesium or manganese ions per subunit.</text>
</comment>
<comment type="pathway">
    <text evidence="2">Cell wall biogenesis; peptidoglycan biosynthesis.</text>
</comment>
<comment type="subcellular location">
    <subcellularLocation>
        <location evidence="2">Cytoplasm</location>
    </subcellularLocation>
</comment>
<comment type="similarity">
    <text evidence="2">Belongs to the D-alanine--D-alanine ligase family.</text>
</comment>
<name>DDL_POLAQ</name>
<dbReference type="EC" id="6.3.2.4" evidence="2"/>
<dbReference type="EMBL" id="CP000655">
    <property type="protein sequence ID" value="ABP33390.1"/>
    <property type="molecule type" value="Genomic_DNA"/>
</dbReference>
<dbReference type="RefSeq" id="WP_011902015.1">
    <property type="nucleotide sequence ID" value="NC_009379.1"/>
</dbReference>
<dbReference type="SMR" id="A4SV76"/>
<dbReference type="GeneID" id="31480518"/>
<dbReference type="KEGG" id="pnu:Pnuc_0169"/>
<dbReference type="eggNOG" id="COG1181">
    <property type="taxonomic scope" value="Bacteria"/>
</dbReference>
<dbReference type="HOGENOM" id="CLU_039268_1_2_4"/>
<dbReference type="UniPathway" id="UPA00219"/>
<dbReference type="Proteomes" id="UP000000231">
    <property type="component" value="Chromosome"/>
</dbReference>
<dbReference type="GO" id="GO:0005829">
    <property type="term" value="C:cytosol"/>
    <property type="evidence" value="ECO:0007669"/>
    <property type="project" value="TreeGrafter"/>
</dbReference>
<dbReference type="GO" id="GO:0005524">
    <property type="term" value="F:ATP binding"/>
    <property type="evidence" value="ECO:0007669"/>
    <property type="project" value="UniProtKB-KW"/>
</dbReference>
<dbReference type="GO" id="GO:0008716">
    <property type="term" value="F:D-alanine-D-alanine ligase activity"/>
    <property type="evidence" value="ECO:0007669"/>
    <property type="project" value="UniProtKB-UniRule"/>
</dbReference>
<dbReference type="GO" id="GO:0046872">
    <property type="term" value="F:metal ion binding"/>
    <property type="evidence" value="ECO:0007669"/>
    <property type="project" value="UniProtKB-KW"/>
</dbReference>
<dbReference type="GO" id="GO:0071555">
    <property type="term" value="P:cell wall organization"/>
    <property type="evidence" value="ECO:0007669"/>
    <property type="project" value="UniProtKB-KW"/>
</dbReference>
<dbReference type="GO" id="GO:0009252">
    <property type="term" value="P:peptidoglycan biosynthetic process"/>
    <property type="evidence" value="ECO:0007669"/>
    <property type="project" value="UniProtKB-UniRule"/>
</dbReference>
<dbReference type="GO" id="GO:0008360">
    <property type="term" value="P:regulation of cell shape"/>
    <property type="evidence" value="ECO:0007669"/>
    <property type="project" value="UniProtKB-KW"/>
</dbReference>
<dbReference type="FunFam" id="3.30.470.20:FF:000008">
    <property type="entry name" value="D-alanine--D-alanine ligase"/>
    <property type="match status" value="1"/>
</dbReference>
<dbReference type="Gene3D" id="3.40.50.20">
    <property type="match status" value="1"/>
</dbReference>
<dbReference type="Gene3D" id="3.30.1490.20">
    <property type="entry name" value="ATP-grasp fold, A domain"/>
    <property type="match status" value="1"/>
</dbReference>
<dbReference type="Gene3D" id="3.30.470.20">
    <property type="entry name" value="ATP-grasp fold, B domain"/>
    <property type="match status" value="1"/>
</dbReference>
<dbReference type="HAMAP" id="MF_00047">
    <property type="entry name" value="Dala_Dala_lig"/>
    <property type="match status" value="1"/>
</dbReference>
<dbReference type="InterPro" id="IPR011761">
    <property type="entry name" value="ATP-grasp"/>
</dbReference>
<dbReference type="InterPro" id="IPR013815">
    <property type="entry name" value="ATP_grasp_subdomain_1"/>
</dbReference>
<dbReference type="InterPro" id="IPR000291">
    <property type="entry name" value="D-Ala_lig_Van_CS"/>
</dbReference>
<dbReference type="InterPro" id="IPR005905">
    <property type="entry name" value="D_ala_D_ala"/>
</dbReference>
<dbReference type="InterPro" id="IPR011095">
    <property type="entry name" value="Dala_Dala_lig_C"/>
</dbReference>
<dbReference type="InterPro" id="IPR011127">
    <property type="entry name" value="Dala_Dala_lig_N"/>
</dbReference>
<dbReference type="InterPro" id="IPR016185">
    <property type="entry name" value="PreATP-grasp_dom_sf"/>
</dbReference>
<dbReference type="NCBIfam" id="TIGR01205">
    <property type="entry name" value="D_ala_D_alaTIGR"/>
    <property type="match status" value="1"/>
</dbReference>
<dbReference type="NCBIfam" id="NF002378">
    <property type="entry name" value="PRK01372.1"/>
    <property type="match status" value="1"/>
</dbReference>
<dbReference type="PANTHER" id="PTHR23132">
    <property type="entry name" value="D-ALANINE--D-ALANINE LIGASE"/>
    <property type="match status" value="1"/>
</dbReference>
<dbReference type="PANTHER" id="PTHR23132:SF23">
    <property type="entry name" value="D-ALANINE--D-ALANINE LIGASE B"/>
    <property type="match status" value="1"/>
</dbReference>
<dbReference type="Pfam" id="PF07478">
    <property type="entry name" value="Dala_Dala_lig_C"/>
    <property type="match status" value="1"/>
</dbReference>
<dbReference type="Pfam" id="PF01820">
    <property type="entry name" value="Dala_Dala_lig_N"/>
    <property type="match status" value="1"/>
</dbReference>
<dbReference type="PIRSF" id="PIRSF039102">
    <property type="entry name" value="Ddl/VanB"/>
    <property type="match status" value="1"/>
</dbReference>
<dbReference type="SUPFAM" id="SSF56059">
    <property type="entry name" value="Glutathione synthetase ATP-binding domain-like"/>
    <property type="match status" value="1"/>
</dbReference>
<dbReference type="SUPFAM" id="SSF52440">
    <property type="entry name" value="PreATP-grasp domain"/>
    <property type="match status" value="1"/>
</dbReference>
<dbReference type="PROSITE" id="PS50975">
    <property type="entry name" value="ATP_GRASP"/>
    <property type="match status" value="1"/>
</dbReference>
<dbReference type="PROSITE" id="PS00843">
    <property type="entry name" value="DALA_DALA_LIGASE_1"/>
    <property type="match status" value="1"/>
</dbReference>
<proteinExistence type="inferred from homology"/>
<protein>
    <recommendedName>
        <fullName evidence="2">D-alanine--D-alanine ligase</fullName>
        <ecNumber evidence="2">6.3.2.4</ecNumber>
    </recommendedName>
    <alternativeName>
        <fullName evidence="2">D-Ala-D-Ala ligase</fullName>
    </alternativeName>
    <alternativeName>
        <fullName evidence="2">D-alanylalanine synthetase</fullName>
    </alternativeName>
</protein>
<organism>
    <name type="scientific">Polynucleobacter asymbioticus (strain DSM 18221 / CIP 109841 / QLW-P1DMWA-1)</name>
    <name type="common">Polynucleobacter necessarius subsp. asymbioticus</name>
    <dbReference type="NCBI Taxonomy" id="312153"/>
    <lineage>
        <taxon>Bacteria</taxon>
        <taxon>Pseudomonadati</taxon>
        <taxon>Pseudomonadota</taxon>
        <taxon>Betaproteobacteria</taxon>
        <taxon>Burkholderiales</taxon>
        <taxon>Burkholderiaceae</taxon>
        <taxon>Polynucleobacter</taxon>
    </lineage>
</organism>
<feature type="chain" id="PRO_0000341152" description="D-alanine--D-alanine ligase">
    <location>
        <begin position="1"/>
        <end position="337"/>
    </location>
</feature>
<feature type="domain" description="ATP-grasp" evidence="2">
    <location>
        <begin position="126"/>
        <end position="326"/>
    </location>
</feature>
<feature type="binding site" evidence="2">
    <location>
        <begin position="152"/>
        <end position="207"/>
    </location>
    <ligand>
        <name>ATP</name>
        <dbReference type="ChEBI" id="CHEBI:30616"/>
    </ligand>
</feature>
<feature type="binding site" evidence="2">
    <location>
        <position position="279"/>
    </location>
    <ligand>
        <name>Mg(2+)</name>
        <dbReference type="ChEBI" id="CHEBI:18420"/>
        <label>1</label>
    </ligand>
</feature>
<feature type="binding site" evidence="2">
    <location>
        <position position="293"/>
    </location>
    <ligand>
        <name>Mg(2+)</name>
        <dbReference type="ChEBI" id="CHEBI:18420"/>
        <label>1</label>
    </ligand>
</feature>
<feature type="binding site" evidence="2">
    <location>
        <position position="293"/>
    </location>
    <ligand>
        <name>Mg(2+)</name>
        <dbReference type="ChEBI" id="CHEBI:18420"/>
        <label>2</label>
    </ligand>
</feature>
<feature type="binding site" evidence="2">
    <location>
        <position position="295"/>
    </location>
    <ligand>
        <name>Mg(2+)</name>
        <dbReference type="ChEBI" id="CHEBI:18420"/>
        <label>2</label>
    </ligand>
</feature>
<reference key="1">
    <citation type="journal article" date="2012" name="Stand. Genomic Sci.">
        <title>Complete genome sequence of Polynucleobacter necessarius subsp. asymbioticus type strain (QLW-P1DMWA-1(T)).</title>
        <authorList>
            <person name="Meincke L."/>
            <person name="Copeland A."/>
            <person name="Lapidus A."/>
            <person name="Lucas S."/>
            <person name="Berry K.W."/>
            <person name="Del Rio T.G."/>
            <person name="Hammon N."/>
            <person name="Dalin E."/>
            <person name="Tice H."/>
            <person name="Pitluck S."/>
            <person name="Richardson P."/>
            <person name="Bruce D."/>
            <person name="Goodwin L."/>
            <person name="Han C."/>
            <person name="Tapia R."/>
            <person name="Detter J.C."/>
            <person name="Schmutz J."/>
            <person name="Brettin T."/>
            <person name="Larimer F."/>
            <person name="Land M."/>
            <person name="Hauser L."/>
            <person name="Kyrpides N.C."/>
            <person name="Ivanova N."/>
            <person name="Goker M."/>
            <person name="Woyke T."/>
            <person name="Wu Q.L."/>
            <person name="Pockl M."/>
            <person name="Hahn M.W."/>
            <person name="Klenk H.P."/>
        </authorList>
    </citation>
    <scope>NUCLEOTIDE SEQUENCE [LARGE SCALE GENOMIC DNA]</scope>
    <source>
        <strain>DSM 18221 / CIP 109841 / QLW-P1DMWA-1</strain>
    </source>
</reference>
<gene>
    <name evidence="2" type="primary">ddl</name>
    <name type="ordered locus">Pnuc_0169</name>
</gene>